<reference key="1">
    <citation type="journal article" date="1998" name="Biochimie">
        <title>The protein sequence of an archaeal catalase-peroxidase.</title>
        <authorList>
            <person name="Cannac-Caffrey V."/>
            <person name="Hudry-Clergeon G."/>
            <person name="Petillot Y."/>
            <person name="Gagnon J."/>
            <person name="Zaccai G."/>
            <person name="Franzetti B."/>
        </authorList>
    </citation>
    <scope>NUCLEOTIDE SEQUENCE [GENOMIC DNA]</scope>
    <scope>PARTIAL PROTEIN SEQUENCE</scope>
    <scope>MASS SPECTROMETRY</scope>
</reference>
<reference key="2">
    <citation type="journal article" date="2004" name="Genome Res.">
        <title>Genome sequence of Haloarcula marismortui: a halophilic archaeon from the Dead Sea.</title>
        <authorList>
            <person name="Baliga N.S."/>
            <person name="Bonneau R."/>
            <person name="Facciotti M.T."/>
            <person name="Pan M."/>
            <person name="Glusman G."/>
            <person name="Deutsch E.W."/>
            <person name="Shannon P."/>
            <person name="Chiu Y."/>
            <person name="Weng R.S."/>
            <person name="Gan R.R."/>
            <person name="Hung P."/>
            <person name="Date S.V."/>
            <person name="Marcotte E."/>
            <person name="Hood L."/>
            <person name="Ng W.V."/>
        </authorList>
    </citation>
    <scope>NUCLEOTIDE SEQUENCE [LARGE SCALE GENOMIC DNA]</scope>
    <source>
        <strain>ATCC 43049 / DSM 3752 / JCM 8966 / VKM B-1809</strain>
    </source>
</reference>
<reference key="3">
    <citation type="journal article" date="2002" name="Nat. Struct. Biol.">
        <title>The 2.0 A crystal structure of catalase-peroxidase from Haloarcula marismortui.</title>
        <authorList>
            <person name="Yamada Y."/>
            <person name="Fujiwara T."/>
            <person name="Sato T."/>
            <person name="Igarashi N."/>
            <person name="Tanaka N."/>
        </authorList>
    </citation>
    <scope>X-RAY CRYSTALLOGRAPHY (2.0 ANGSTROMS) OF 19-731</scope>
</reference>
<proteinExistence type="evidence at protein level"/>
<organism>
    <name type="scientific">Haloarcula marismortui (strain ATCC 43049 / DSM 3752 / JCM 8966 / VKM B-1809)</name>
    <name type="common">Halobacterium marismortui</name>
    <dbReference type="NCBI Taxonomy" id="272569"/>
    <lineage>
        <taxon>Archaea</taxon>
        <taxon>Methanobacteriati</taxon>
        <taxon>Methanobacteriota</taxon>
        <taxon>Stenosarchaea group</taxon>
        <taxon>Halobacteria</taxon>
        <taxon>Halobacteriales</taxon>
        <taxon>Haloarculaceae</taxon>
        <taxon>Haloarcula</taxon>
    </lineage>
</organism>
<name>KATG2_HALMA</name>
<dbReference type="EC" id="1.11.1.21" evidence="1"/>
<dbReference type="EMBL" id="Y16851">
    <property type="protein sequence ID" value="CAA76423.1"/>
    <property type="molecule type" value="Genomic_DNA"/>
</dbReference>
<dbReference type="EMBL" id="AY596297">
    <property type="protein sequence ID" value="AAV46121.1"/>
    <property type="status" value="ALT_INIT"/>
    <property type="molecule type" value="Genomic_DNA"/>
</dbReference>
<dbReference type="PIR" id="T44846">
    <property type="entry name" value="T44846"/>
</dbReference>
<dbReference type="RefSeq" id="WP_049938864.1">
    <property type="nucleotide sequence ID" value="NC_006396.1"/>
</dbReference>
<dbReference type="PDB" id="1ITK">
    <property type="method" value="X-ray"/>
    <property type="resolution" value="2.00 A"/>
    <property type="chains" value="A/B=1-731"/>
</dbReference>
<dbReference type="PDB" id="3UW8">
    <property type="method" value="X-ray"/>
    <property type="resolution" value="2.35 A"/>
    <property type="chains" value="A/B=1-731"/>
</dbReference>
<dbReference type="PDB" id="3VLH">
    <property type="method" value="X-ray"/>
    <property type="resolution" value="1.73 A"/>
    <property type="chains" value="A/B=1-731"/>
</dbReference>
<dbReference type="PDB" id="3VLI">
    <property type="method" value="X-ray"/>
    <property type="resolution" value="1.70 A"/>
    <property type="chains" value="A/B=1-731"/>
</dbReference>
<dbReference type="PDB" id="3VLJ">
    <property type="method" value="X-ray"/>
    <property type="resolution" value="1.70 A"/>
    <property type="chains" value="A/B=1-731"/>
</dbReference>
<dbReference type="PDB" id="3VLK">
    <property type="method" value="X-ray"/>
    <property type="resolution" value="2.00 A"/>
    <property type="chains" value="A/B=1-731"/>
</dbReference>
<dbReference type="PDB" id="3VLL">
    <property type="method" value="X-ray"/>
    <property type="resolution" value="2.00 A"/>
    <property type="chains" value="A/B=1-731"/>
</dbReference>
<dbReference type="PDB" id="3VLM">
    <property type="method" value="X-ray"/>
    <property type="resolution" value="2.33 A"/>
    <property type="chains" value="A/B=1-731"/>
</dbReference>
<dbReference type="PDBsum" id="1ITK"/>
<dbReference type="PDBsum" id="3UW8"/>
<dbReference type="PDBsum" id="3VLH"/>
<dbReference type="PDBsum" id="3VLI"/>
<dbReference type="PDBsum" id="3VLJ"/>
<dbReference type="PDBsum" id="3VLK"/>
<dbReference type="PDBsum" id="3VLL"/>
<dbReference type="PDBsum" id="3VLM"/>
<dbReference type="SMR" id="O59651"/>
<dbReference type="STRING" id="272569.rrnAC1171"/>
<dbReference type="PeroxiBase" id="2440">
    <property type="entry name" value="HmaCP01"/>
</dbReference>
<dbReference type="PaxDb" id="272569-rrnAC1171"/>
<dbReference type="EnsemblBacteria" id="AAV46121">
    <property type="protein sequence ID" value="AAV46121"/>
    <property type="gene ID" value="rrnAC1171"/>
</dbReference>
<dbReference type="GeneID" id="40152166"/>
<dbReference type="KEGG" id="hma:rrnAC1171"/>
<dbReference type="PATRIC" id="fig|272569.17.peg.1887"/>
<dbReference type="eggNOG" id="arCOG04487">
    <property type="taxonomic scope" value="Archaea"/>
</dbReference>
<dbReference type="HOGENOM" id="CLU_025424_2_0_2"/>
<dbReference type="BRENDA" id="1.11.1.21">
    <property type="organism ID" value="2549"/>
</dbReference>
<dbReference type="EvolutionaryTrace" id="O59651"/>
<dbReference type="Proteomes" id="UP000001169">
    <property type="component" value="Chromosome I"/>
</dbReference>
<dbReference type="GO" id="GO:0005829">
    <property type="term" value="C:cytosol"/>
    <property type="evidence" value="ECO:0007669"/>
    <property type="project" value="TreeGrafter"/>
</dbReference>
<dbReference type="GO" id="GO:0004096">
    <property type="term" value="F:catalase activity"/>
    <property type="evidence" value="ECO:0007669"/>
    <property type="project" value="UniProtKB-UniRule"/>
</dbReference>
<dbReference type="GO" id="GO:0020037">
    <property type="term" value="F:heme binding"/>
    <property type="evidence" value="ECO:0007669"/>
    <property type="project" value="InterPro"/>
</dbReference>
<dbReference type="GO" id="GO:0046872">
    <property type="term" value="F:metal ion binding"/>
    <property type="evidence" value="ECO:0007669"/>
    <property type="project" value="UniProtKB-KW"/>
</dbReference>
<dbReference type="GO" id="GO:0070301">
    <property type="term" value="P:cellular response to hydrogen peroxide"/>
    <property type="evidence" value="ECO:0007669"/>
    <property type="project" value="TreeGrafter"/>
</dbReference>
<dbReference type="GO" id="GO:0042744">
    <property type="term" value="P:hydrogen peroxide catabolic process"/>
    <property type="evidence" value="ECO:0007669"/>
    <property type="project" value="UniProtKB-KW"/>
</dbReference>
<dbReference type="CDD" id="cd00649">
    <property type="entry name" value="catalase_peroxidase_1"/>
    <property type="match status" value="1"/>
</dbReference>
<dbReference type="CDD" id="cd08200">
    <property type="entry name" value="catalase_peroxidase_2"/>
    <property type="match status" value="1"/>
</dbReference>
<dbReference type="FunFam" id="1.10.420.10:FF:000004">
    <property type="entry name" value="Catalase-peroxidase"/>
    <property type="match status" value="1"/>
</dbReference>
<dbReference type="FunFam" id="1.10.520.10:FF:000002">
    <property type="entry name" value="Catalase-peroxidase"/>
    <property type="match status" value="1"/>
</dbReference>
<dbReference type="Gene3D" id="1.10.520.10">
    <property type="match status" value="2"/>
</dbReference>
<dbReference type="Gene3D" id="1.10.420.10">
    <property type="entry name" value="Peroxidase, domain 2"/>
    <property type="match status" value="2"/>
</dbReference>
<dbReference type="HAMAP" id="MF_01961">
    <property type="entry name" value="Catal_peroxid"/>
    <property type="match status" value="1"/>
</dbReference>
<dbReference type="InterPro" id="IPR000763">
    <property type="entry name" value="Catalase_peroxidase"/>
</dbReference>
<dbReference type="InterPro" id="IPR002016">
    <property type="entry name" value="Haem_peroxidase"/>
</dbReference>
<dbReference type="InterPro" id="IPR010255">
    <property type="entry name" value="Haem_peroxidase_sf"/>
</dbReference>
<dbReference type="InterPro" id="IPR019794">
    <property type="entry name" value="Peroxidases_AS"/>
</dbReference>
<dbReference type="InterPro" id="IPR019793">
    <property type="entry name" value="Peroxidases_heam-ligand_BS"/>
</dbReference>
<dbReference type="NCBIfam" id="TIGR00198">
    <property type="entry name" value="cat_per_HPI"/>
    <property type="match status" value="1"/>
</dbReference>
<dbReference type="NCBIfam" id="NF011635">
    <property type="entry name" value="PRK15061.1"/>
    <property type="match status" value="1"/>
</dbReference>
<dbReference type="PANTHER" id="PTHR30555:SF0">
    <property type="entry name" value="CATALASE-PEROXIDASE"/>
    <property type="match status" value="1"/>
</dbReference>
<dbReference type="PANTHER" id="PTHR30555">
    <property type="entry name" value="HYDROPEROXIDASE I, BIFUNCTIONAL CATALASE-PEROXIDASE"/>
    <property type="match status" value="1"/>
</dbReference>
<dbReference type="Pfam" id="PF00141">
    <property type="entry name" value="peroxidase"/>
    <property type="match status" value="2"/>
</dbReference>
<dbReference type="PRINTS" id="PR00460">
    <property type="entry name" value="BPEROXIDASE"/>
</dbReference>
<dbReference type="PRINTS" id="PR00458">
    <property type="entry name" value="PEROXIDASE"/>
</dbReference>
<dbReference type="SUPFAM" id="SSF48113">
    <property type="entry name" value="Heme-dependent peroxidases"/>
    <property type="match status" value="2"/>
</dbReference>
<dbReference type="PROSITE" id="PS00435">
    <property type="entry name" value="PEROXIDASE_1"/>
    <property type="match status" value="1"/>
</dbReference>
<dbReference type="PROSITE" id="PS00436">
    <property type="entry name" value="PEROXIDASE_2"/>
    <property type="match status" value="1"/>
</dbReference>
<dbReference type="PROSITE" id="PS50873">
    <property type="entry name" value="PEROXIDASE_4"/>
    <property type="match status" value="1"/>
</dbReference>
<feature type="initiator methionine" description="Removed">
    <location>
        <position position="1"/>
    </location>
</feature>
<feature type="chain" id="PRO_0000055580" description="Catalase-peroxidase 2">
    <location>
        <begin position="2"/>
        <end position="731"/>
    </location>
</feature>
<feature type="region of interest" description="Disordered" evidence="2">
    <location>
        <begin position="1"/>
        <end position="26"/>
    </location>
</feature>
<feature type="compositionally biased region" description="Polar residues" evidence="2">
    <location>
        <begin position="1"/>
        <end position="10"/>
    </location>
</feature>
<feature type="active site" description="Proton acceptor">
    <location>
        <position position="96"/>
    </location>
</feature>
<feature type="binding site" description="axial binding residue">
    <location>
        <position position="259"/>
    </location>
    <ligand>
        <name>heme b</name>
        <dbReference type="ChEBI" id="CHEBI:60344"/>
    </ligand>
    <ligandPart>
        <name>Fe</name>
        <dbReference type="ChEBI" id="CHEBI:18248"/>
    </ligandPart>
</feature>
<feature type="site" description="Transition state stabilizer">
    <location>
        <position position="92"/>
    </location>
</feature>
<feature type="cross-link" description="Tryptophyl-tyrosyl-methioninium (Trp-Tyr) (with M-244)">
    <location>
        <begin position="95"/>
        <end position="218"/>
    </location>
</feature>
<feature type="cross-link" description="Tryptophyl-tyrosyl-methioninium (Tyr-Met) (with W-95)">
    <location>
        <begin position="218"/>
        <end position="244"/>
    </location>
</feature>
<feature type="helix" evidence="7">
    <location>
        <begin position="23"/>
        <end position="26"/>
    </location>
</feature>
<feature type="helix" evidence="7">
    <location>
        <begin position="34"/>
        <end position="37"/>
    </location>
</feature>
<feature type="turn" evidence="7">
    <location>
        <begin position="38"/>
        <end position="40"/>
    </location>
</feature>
<feature type="strand" evidence="6">
    <location>
        <begin position="44"/>
        <end position="46"/>
    </location>
</feature>
<feature type="strand" evidence="8">
    <location>
        <begin position="48"/>
        <end position="50"/>
    </location>
</feature>
<feature type="helix" evidence="7">
    <location>
        <begin position="52"/>
        <end position="58"/>
    </location>
</feature>
<feature type="helix" evidence="7">
    <location>
        <begin position="61"/>
        <end position="72"/>
    </location>
</feature>
<feature type="helix" evidence="7">
    <location>
        <begin position="82"/>
        <end position="84"/>
    </location>
</feature>
<feature type="helix" evidence="7">
    <location>
        <begin position="87"/>
        <end position="98"/>
    </location>
</feature>
<feature type="turn" evidence="7">
    <location>
        <begin position="103"/>
        <end position="105"/>
    </location>
</feature>
<feature type="strand" evidence="7">
    <location>
        <begin position="108"/>
        <end position="110"/>
    </location>
</feature>
<feature type="helix" evidence="7">
    <location>
        <begin position="114"/>
        <end position="116"/>
    </location>
</feature>
<feature type="helix" evidence="7">
    <location>
        <begin position="120"/>
        <end position="122"/>
    </location>
</feature>
<feature type="helix" evidence="7">
    <location>
        <begin position="124"/>
        <end position="126"/>
    </location>
</feature>
<feature type="helix" evidence="7">
    <location>
        <begin position="129"/>
        <end position="135"/>
    </location>
</feature>
<feature type="helix" evidence="7">
    <location>
        <begin position="137"/>
        <end position="143"/>
    </location>
</feature>
<feature type="helix" evidence="7">
    <location>
        <begin position="144"/>
        <end position="146"/>
    </location>
</feature>
<feature type="helix" evidence="7">
    <location>
        <begin position="149"/>
        <end position="163"/>
    </location>
</feature>
<feature type="strand" evidence="9">
    <location>
        <begin position="191"/>
        <end position="194"/>
    </location>
</feature>
<feature type="strand" evidence="9">
    <location>
        <begin position="198"/>
        <end position="201"/>
    </location>
</feature>
<feature type="strand" evidence="7">
    <location>
        <begin position="216"/>
        <end position="219"/>
    </location>
</feature>
<feature type="helix" evidence="7">
    <location>
        <begin position="224"/>
        <end position="226"/>
    </location>
</feature>
<feature type="helix" evidence="7">
    <location>
        <begin position="230"/>
        <end position="242"/>
    </location>
</feature>
<feature type="turn" evidence="7">
    <location>
        <begin position="243"/>
        <end position="245"/>
    </location>
</feature>
<feature type="helix" evidence="7">
    <location>
        <begin position="248"/>
        <end position="258"/>
    </location>
</feature>
<feature type="strand" evidence="7">
    <location>
        <begin position="266"/>
        <end position="268"/>
    </location>
</feature>
<feature type="helix" evidence="7">
    <location>
        <begin position="270"/>
        <end position="273"/>
    </location>
</feature>
<feature type="helix" evidence="7">
    <location>
        <begin position="278"/>
        <end position="280"/>
    </location>
</feature>
<feature type="helix" evidence="7">
    <location>
        <begin position="283"/>
        <end position="285"/>
    </location>
</feature>
<feature type="turn" evidence="9">
    <location>
        <begin position="293"/>
        <end position="295"/>
    </location>
</feature>
<feature type="helix" evidence="5">
    <location>
        <begin position="299"/>
        <end position="301"/>
    </location>
</feature>
<feature type="strand" evidence="7">
    <location>
        <begin position="303"/>
        <end position="306"/>
    </location>
</feature>
<feature type="strand" evidence="7">
    <location>
        <begin position="309"/>
        <end position="314"/>
    </location>
</feature>
<feature type="helix" evidence="7">
    <location>
        <begin position="321"/>
        <end position="328"/>
    </location>
</feature>
<feature type="strand" evidence="7">
    <location>
        <begin position="331"/>
        <end position="335"/>
    </location>
</feature>
<feature type="strand" evidence="7">
    <location>
        <begin position="341"/>
        <end position="347"/>
    </location>
</feature>
<feature type="helix" evidence="7">
    <location>
        <begin position="348"/>
        <end position="350"/>
    </location>
</feature>
<feature type="strand" evidence="7">
    <location>
        <begin position="354"/>
        <end position="356"/>
    </location>
</feature>
<feature type="strand" evidence="7">
    <location>
        <begin position="359"/>
        <end position="364"/>
    </location>
</feature>
<feature type="helix" evidence="7">
    <location>
        <begin position="370"/>
        <end position="377"/>
    </location>
</feature>
<feature type="helix" evidence="7">
    <location>
        <begin position="379"/>
        <end position="390"/>
    </location>
</feature>
<feature type="helix" evidence="7">
    <location>
        <begin position="392"/>
        <end position="408"/>
    </location>
</feature>
<feature type="helix" evidence="7">
    <location>
        <begin position="414"/>
        <end position="416"/>
    </location>
</feature>
<feature type="helix" evidence="7">
    <location>
        <begin position="428"/>
        <end position="430"/>
    </location>
</feature>
<feature type="helix" evidence="7">
    <location>
        <begin position="443"/>
        <end position="455"/>
    </location>
</feature>
<feature type="helix" evidence="7">
    <location>
        <begin position="460"/>
        <end position="471"/>
    </location>
</feature>
<feature type="turn" evidence="7">
    <location>
        <begin position="476"/>
        <end position="479"/>
    </location>
</feature>
<feature type="helix" evidence="7">
    <location>
        <begin position="487"/>
        <end position="489"/>
    </location>
</feature>
<feature type="helix" evidence="7">
    <location>
        <begin position="493"/>
        <end position="495"/>
    </location>
</feature>
<feature type="helix" evidence="7">
    <location>
        <begin position="497"/>
        <end position="499"/>
    </location>
</feature>
<feature type="helix" evidence="7">
    <location>
        <begin position="501"/>
        <end position="521"/>
    </location>
</feature>
<feature type="strand" evidence="7">
    <location>
        <begin position="524"/>
        <end position="526"/>
    </location>
</feature>
<feature type="helix" evidence="7">
    <location>
        <begin position="530"/>
        <end position="548"/>
    </location>
</feature>
<feature type="helix" evidence="7">
    <location>
        <begin position="566"/>
        <end position="568"/>
    </location>
</feature>
<feature type="helix" evidence="7">
    <location>
        <begin position="571"/>
        <end position="574"/>
    </location>
</feature>
<feature type="helix" evidence="7">
    <location>
        <begin position="575"/>
        <end position="577"/>
    </location>
</feature>
<feature type="strand" evidence="7">
    <location>
        <begin position="580"/>
        <end position="582"/>
    </location>
</feature>
<feature type="turn" evidence="7">
    <location>
        <begin position="583"/>
        <end position="586"/>
    </location>
</feature>
<feature type="helix" evidence="7">
    <location>
        <begin position="596"/>
        <end position="606"/>
    </location>
</feature>
<feature type="helix" evidence="7">
    <location>
        <begin position="611"/>
        <end position="624"/>
    </location>
</feature>
<feature type="helix" evidence="7">
    <location>
        <begin position="628"/>
        <end position="630"/>
    </location>
</feature>
<feature type="helix" evidence="7">
    <location>
        <begin position="646"/>
        <end position="652"/>
    </location>
</feature>
<feature type="strand" evidence="7">
    <location>
        <begin position="656"/>
        <end position="660"/>
    </location>
</feature>
<feature type="strand" evidence="7">
    <location>
        <begin position="668"/>
        <end position="672"/>
    </location>
</feature>
<feature type="turn" evidence="7">
    <location>
        <begin position="673"/>
        <end position="675"/>
    </location>
</feature>
<feature type="strand" evidence="7">
    <location>
        <begin position="678"/>
        <end position="682"/>
    </location>
</feature>
<feature type="helix" evidence="7">
    <location>
        <begin position="684"/>
        <end position="687"/>
    </location>
</feature>
<feature type="helix" evidence="7">
    <location>
        <begin position="688"/>
        <end position="690"/>
    </location>
</feature>
<feature type="helix" evidence="7">
    <location>
        <begin position="693"/>
        <end position="702"/>
    </location>
</feature>
<feature type="helix" evidence="7">
    <location>
        <begin position="708"/>
        <end position="723"/>
    </location>
</feature>
<feature type="turn" evidence="7">
    <location>
        <begin position="724"/>
        <end position="726"/>
    </location>
</feature>
<feature type="turn" evidence="6">
    <location>
        <begin position="728"/>
        <end position="730"/>
    </location>
</feature>
<sequence length="731" mass="81384">MAETPNSDMSGATGGRSKRPKSNQDWWPSKLNLEILDQNARDVGPVEDDFDYAEEFQKLDLEAVKSDLEELMTSSQDWWPADYGHYGPLFIRMAWHSAGTYRTADGRGGAAGGRQRFAPINSWPDNANLDKARRLLLPIKQKYGQKISWADLMILAGNVAIESMGFKTFGYAGGREDAFEEDKAVNWGPEDEFETQERFDEPGEIQEGLGASVMGLIYVNPEGPDGNPDPEASAKNIRQTFDRMAMNDKETAALIAGGHTFGKVHGADDPEENLGPEPEAAPIEQQGLGWQNKNGNSKGGEMITSGIEGPWTQSPTEWDMGYINNLLDYEWEPEKGPGGAWQWAPKSEELKNSVPDAHDPDEKQTPMMLTTDIALKRDPDYREVMETFQENPMEFGMNFAKAWYKLTHRDMGPPERFLGPEVPDEEMIWQDPLPDADYDLIGDEEIAELKEEILDSDLSVSQLVKTAWASASTYRDSDKRGGANGARLRLEPQKNWEVNEPEQLETVLGTLENIQTEFNDSRSDGTQVSLADLIVLGGNAAVEQAAANAGYDVEIPFEPGRVDAGPEHTDAPSFDALKPKVDGVRNYIQDDITRPAEEVLVDNADLLNLTASELTALIGGMRSIGANYQDTDLGVFTDEPETLTNDFFVNLLDMGTEWEPAADSEHRYKGLDRDTGEVKWEATRIDLIFGSNDRLRAISEVYGSADAEKKLVHDFVDTWSKVMKLDRFDLE</sequence>
<protein>
    <recommendedName>
        <fullName evidence="1">Catalase-peroxidase 2</fullName>
        <shortName evidence="1">CP 2</shortName>
        <ecNumber evidence="1">1.11.1.21</ecNumber>
    </recommendedName>
    <alternativeName>
        <fullName evidence="1">Peroxidase/catalase 2</fullName>
    </alternativeName>
</protein>
<keyword id="KW-0002">3D-structure</keyword>
<keyword id="KW-0903">Direct protein sequencing</keyword>
<keyword id="KW-0349">Heme</keyword>
<keyword id="KW-0376">Hydrogen peroxide</keyword>
<keyword id="KW-0408">Iron</keyword>
<keyword id="KW-0479">Metal-binding</keyword>
<keyword id="KW-0560">Oxidoreductase</keyword>
<keyword id="KW-0575">Peroxidase</keyword>
<keyword id="KW-1185">Reference proteome</keyword>
<evidence type="ECO:0000255" key="1">
    <source>
        <dbReference type="HAMAP-Rule" id="MF_01961"/>
    </source>
</evidence>
<evidence type="ECO:0000256" key="2">
    <source>
        <dbReference type="SAM" id="MobiDB-lite"/>
    </source>
</evidence>
<evidence type="ECO:0000269" key="3">
    <source>
    </source>
</evidence>
<evidence type="ECO:0000305" key="4"/>
<evidence type="ECO:0007829" key="5">
    <source>
        <dbReference type="PDB" id="1ITK"/>
    </source>
</evidence>
<evidence type="ECO:0007829" key="6">
    <source>
        <dbReference type="PDB" id="3VLH"/>
    </source>
</evidence>
<evidence type="ECO:0007829" key="7">
    <source>
        <dbReference type="PDB" id="3VLI"/>
    </source>
</evidence>
<evidence type="ECO:0007829" key="8">
    <source>
        <dbReference type="PDB" id="3VLJ"/>
    </source>
</evidence>
<evidence type="ECO:0007829" key="9">
    <source>
        <dbReference type="PDB" id="3VLL"/>
    </source>
</evidence>
<gene>
    <name evidence="1" type="primary">katG2</name>
    <name type="synonym">Hmcp</name>
    <name type="ordered locus">rrnAC1171</name>
</gene>
<accession>O59651</accession>
<accession>Q5V2Y1</accession>
<comment type="function">
    <text evidence="1">Bifunctional enzyme with both catalase and broad-spectrum peroxidase activity.</text>
</comment>
<comment type="catalytic activity">
    <reaction evidence="1">
        <text>H2O2 + AH2 = A + 2 H2O</text>
        <dbReference type="Rhea" id="RHEA:30275"/>
        <dbReference type="ChEBI" id="CHEBI:13193"/>
        <dbReference type="ChEBI" id="CHEBI:15377"/>
        <dbReference type="ChEBI" id="CHEBI:16240"/>
        <dbReference type="ChEBI" id="CHEBI:17499"/>
        <dbReference type="EC" id="1.11.1.21"/>
    </reaction>
</comment>
<comment type="catalytic activity">
    <reaction evidence="1">
        <text>2 H2O2 = O2 + 2 H2O</text>
        <dbReference type="Rhea" id="RHEA:20309"/>
        <dbReference type="ChEBI" id="CHEBI:15377"/>
        <dbReference type="ChEBI" id="CHEBI:15379"/>
        <dbReference type="ChEBI" id="CHEBI:16240"/>
        <dbReference type="EC" id="1.11.1.21"/>
    </reaction>
</comment>
<comment type="cofactor">
    <cofactor>
        <name>heme b</name>
        <dbReference type="ChEBI" id="CHEBI:60344"/>
    </cofactor>
    <text>Binds 1 heme b (iron(II)-protoporphyrin IX) group per subunit.</text>
</comment>
<comment type="subunit">
    <text>Homodimer.</text>
</comment>
<comment type="PTM">
    <text evidence="1">Formation of the three residue Trp-Tyr-Met cross-link is important for the catalase, but not the peroxidase activity of the enzyme.</text>
</comment>
<comment type="mass spectrometry" mass="81292.0" error="9.0" method="MALDI" evidence="3"/>
<comment type="similarity">
    <text evidence="1">Belongs to the peroxidase family. Peroxidase/catalase subfamily.</text>
</comment>
<comment type="sequence caution" evidence="4">
    <conflict type="erroneous initiation">
        <sequence resource="EMBL-CDS" id="AAV46121"/>
    </conflict>
</comment>